<evidence type="ECO:0000256" key="1">
    <source>
        <dbReference type="SAM" id="MobiDB-lite"/>
    </source>
</evidence>
<evidence type="ECO:0000305" key="2"/>
<evidence type="ECO:0007829" key="3">
    <source>
        <dbReference type="PDB" id="6SWC"/>
    </source>
</evidence>
<evidence type="ECO:0007829" key="4">
    <source>
        <dbReference type="PDB" id="7ZHG"/>
    </source>
</evidence>
<feature type="chain" id="PRO_0000111469" description="Small ribosomal subunit protein uS9">
    <location>
        <begin position="1"/>
        <end position="135"/>
    </location>
</feature>
<feature type="region of interest" description="Disordered" evidence="1">
    <location>
        <begin position="108"/>
        <end position="135"/>
    </location>
</feature>
<feature type="compositionally biased region" description="Basic and acidic residues" evidence="1">
    <location>
        <begin position="108"/>
        <end position="118"/>
    </location>
</feature>
<feature type="compositionally biased region" description="Basic residues" evidence="1">
    <location>
        <begin position="119"/>
        <end position="135"/>
    </location>
</feature>
<feature type="strand" evidence="4">
    <location>
        <begin position="4"/>
        <end position="10"/>
    </location>
</feature>
<feature type="strand" evidence="4">
    <location>
        <begin position="13"/>
        <end position="21"/>
    </location>
</feature>
<feature type="strand" evidence="3">
    <location>
        <begin position="22"/>
        <end position="24"/>
    </location>
</feature>
<feature type="strand" evidence="4">
    <location>
        <begin position="26"/>
        <end position="28"/>
    </location>
</feature>
<feature type="helix" evidence="4">
    <location>
        <begin position="33"/>
        <end position="35"/>
    </location>
</feature>
<feature type="helix" evidence="4">
    <location>
        <begin position="39"/>
        <end position="52"/>
    </location>
</feature>
<feature type="helix" evidence="4">
    <location>
        <begin position="54"/>
        <end position="57"/>
    </location>
</feature>
<feature type="strand" evidence="4">
    <location>
        <begin position="60"/>
        <end position="69"/>
    </location>
</feature>
<feature type="helix" evidence="4">
    <location>
        <begin position="71"/>
        <end position="90"/>
    </location>
</feature>
<feature type="helix" evidence="4">
    <location>
        <begin position="93"/>
        <end position="102"/>
    </location>
</feature>
<feature type="helix" evidence="4">
    <location>
        <begin position="105"/>
        <end position="108"/>
    </location>
</feature>
<feature type="strand" evidence="4">
    <location>
        <begin position="119"/>
        <end position="121"/>
    </location>
</feature>
<feature type="turn" evidence="4">
    <location>
        <begin position="122"/>
        <end position="124"/>
    </location>
</feature>
<dbReference type="EMBL" id="AJ248284">
    <property type="protein sequence ID" value="CAB49455.1"/>
    <property type="molecule type" value="Genomic_DNA"/>
</dbReference>
<dbReference type="EMBL" id="HE613800">
    <property type="protein sequence ID" value="CCE69922.1"/>
    <property type="molecule type" value="Genomic_DNA"/>
</dbReference>
<dbReference type="PIR" id="H75171">
    <property type="entry name" value="H75171"/>
</dbReference>
<dbReference type="RefSeq" id="WP_010867657.1">
    <property type="nucleotide sequence ID" value="NC_000868.1"/>
</dbReference>
<dbReference type="PDB" id="6SW9">
    <property type="method" value="EM"/>
    <property type="resolution" value="4.20 A"/>
    <property type="chains" value="K=1-135"/>
</dbReference>
<dbReference type="PDB" id="6SWC">
    <property type="method" value="EM"/>
    <property type="resolution" value="3.30 A"/>
    <property type="chains" value="K=1-135"/>
</dbReference>
<dbReference type="PDB" id="6SWE">
    <property type="method" value="EM"/>
    <property type="resolution" value="3.10 A"/>
    <property type="chains" value="K=1-135"/>
</dbReference>
<dbReference type="PDB" id="7ZAG">
    <property type="method" value="EM"/>
    <property type="resolution" value="2.77 A"/>
    <property type="chains" value="K=1-135"/>
</dbReference>
<dbReference type="PDB" id="7ZAH">
    <property type="method" value="EM"/>
    <property type="resolution" value="2.70 A"/>
    <property type="chains" value="K=1-135"/>
</dbReference>
<dbReference type="PDB" id="7ZAI">
    <property type="method" value="EM"/>
    <property type="resolution" value="2.60 A"/>
    <property type="chains" value="K=1-135"/>
</dbReference>
<dbReference type="PDB" id="7ZHG">
    <property type="method" value="EM"/>
    <property type="resolution" value="2.25 A"/>
    <property type="chains" value="K=1-135"/>
</dbReference>
<dbReference type="PDBsum" id="6SW9"/>
<dbReference type="PDBsum" id="6SWC"/>
<dbReference type="PDBsum" id="6SWE"/>
<dbReference type="PDBsum" id="7ZAG"/>
<dbReference type="PDBsum" id="7ZAH"/>
<dbReference type="PDBsum" id="7ZAI"/>
<dbReference type="PDBsum" id="7ZHG"/>
<dbReference type="EMDB" id="EMD-10320"/>
<dbReference type="EMDB" id="EMD-10322"/>
<dbReference type="EMDB" id="EMD-10324"/>
<dbReference type="EMDB" id="EMD-14579"/>
<dbReference type="EMDB" id="EMD-14580"/>
<dbReference type="EMDB" id="EMD-14581"/>
<dbReference type="EMDB" id="EMD-14731"/>
<dbReference type="EMDB" id="EMD-8148"/>
<dbReference type="SMR" id="Q9V195"/>
<dbReference type="STRING" id="272844.PAB0366"/>
<dbReference type="KEGG" id="pab:PAB0366"/>
<dbReference type="PATRIC" id="fig|272844.11.peg.568"/>
<dbReference type="eggNOG" id="arCOG04243">
    <property type="taxonomic scope" value="Archaea"/>
</dbReference>
<dbReference type="HOGENOM" id="CLU_046483_4_0_2"/>
<dbReference type="OrthoDB" id="52677at2157"/>
<dbReference type="PhylomeDB" id="Q9V195"/>
<dbReference type="Proteomes" id="UP000000810">
    <property type="component" value="Chromosome"/>
</dbReference>
<dbReference type="Proteomes" id="UP000009139">
    <property type="component" value="Chromosome"/>
</dbReference>
<dbReference type="GO" id="GO:0022627">
    <property type="term" value="C:cytosolic small ribosomal subunit"/>
    <property type="evidence" value="ECO:0007669"/>
    <property type="project" value="TreeGrafter"/>
</dbReference>
<dbReference type="GO" id="GO:0003723">
    <property type="term" value="F:RNA binding"/>
    <property type="evidence" value="ECO:0007669"/>
    <property type="project" value="TreeGrafter"/>
</dbReference>
<dbReference type="GO" id="GO:0003735">
    <property type="term" value="F:structural constituent of ribosome"/>
    <property type="evidence" value="ECO:0007669"/>
    <property type="project" value="InterPro"/>
</dbReference>
<dbReference type="GO" id="GO:0000462">
    <property type="term" value="P:maturation of SSU-rRNA from tricistronic rRNA transcript (SSU-rRNA, 5.8S rRNA, LSU-rRNA)"/>
    <property type="evidence" value="ECO:0007669"/>
    <property type="project" value="TreeGrafter"/>
</dbReference>
<dbReference type="GO" id="GO:0006412">
    <property type="term" value="P:translation"/>
    <property type="evidence" value="ECO:0007669"/>
    <property type="project" value="UniProtKB-UniRule"/>
</dbReference>
<dbReference type="FunFam" id="3.30.230.10:FF:000051">
    <property type="entry name" value="30S ribosomal protein S9"/>
    <property type="match status" value="1"/>
</dbReference>
<dbReference type="Gene3D" id="3.30.230.10">
    <property type="match status" value="1"/>
</dbReference>
<dbReference type="HAMAP" id="MF_00532_A">
    <property type="entry name" value="Ribosomal_uS9_A"/>
    <property type="match status" value="1"/>
</dbReference>
<dbReference type="InterPro" id="IPR020568">
    <property type="entry name" value="Ribosomal_Su5_D2-typ_SF"/>
</dbReference>
<dbReference type="InterPro" id="IPR000754">
    <property type="entry name" value="Ribosomal_uS9"/>
</dbReference>
<dbReference type="InterPro" id="IPR019958">
    <property type="entry name" value="Ribosomal_uS9_archaeal"/>
</dbReference>
<dbReference type="InterPro" id="IPR020574">
    <property type="entry name" value="Ribosomal_uS9_CS"/>
</dbReference>
<dbReference type="InterPro" id="IPR014721">
    <property type="entry name" value="Ribsml_uS5_D2-typ_fold_subgr"/>
</dbReference>
<dbReference type="NCBIfam" id="NF001749">
    <property type="entry name" value="PRK00474.1"/>
    <property type="match status" value="1"/>
</dbReference>
<dbReference type="NCBIfam" id="TIGR03627">
    <property type="entry name" value="uS9_arch"/>
    <property type="match status" value="1"/>
</dbReference>
<dbReference type="PANTHER" id="PTHR21569:SF16">
    <property type="entry name" value="RIBOSOMAL PROTEIN S16"/>
    <property type="match status" value="1"/>
</dbReference>
<dbReference type="PANTHER" id="PTHR21569">
    <property type="entry name" value="RIBOSOMAL PROTEIN S9"/>
    <property type="match status" value="1"/>
</dbReference>
<dbReference type="Pfam" id="PF00380">
    <property type="entry name" value="Ribosomal_S9"/>
    <property type="match status" value="1"/>
</dbReference>
<dbReference type="SUPFAM" id="SSF54211">
    <property type="entry name" value="Ribosomal protein S5 domain 2-like"/>
    <property type="match status" value="1"/>
</dbReference>
<dbReference type="PROSITE" id="PS00360">
    <property type="entry name" value="RIBOSOMAL_S9"/>
    <property type="match status" value="1"/>
</dbReference>
<keyword id="KW-0002">3D-structure</keyword>
<keyword id="KW-0687">Ribonucleoprotein</keyword>
<keyword id="KW-0689">Ribosomal protein</keyword>
<protein>
    <recommendedName>
        <fullName evidence="2">Small ribosomal subunit protein uS9</fullName>
    </recommendedName>
    <alternativeName>
        <fullName>30S ribosomal protein S9</fullName>
    </alternativeName>
</protein>
<accession>Q9V195</accession>
<accession>G8ZGP3</accession>
<sequence length="135" mass="15265">MRIIQTTGKRKTAIARAVIREGKGRVRINGKPVELVEPEIARFTILEPLILAGEEIWNSVDIDVKVQGGGFMGQAEAARIAIARALVEWTGDMNLKEKFIKYDRTMLVGDPRRTEPHKPNRSTKGPRAKRQKSYR</sequence>
<reference key="1">
    <citation type="journal article" date="2003" name="Mol. Microbiol.">
        <title>An integrated analysis of the genome of the hyperthermophilic archaeon Pyrococcus abyssi.</title>
        <authorList>
            <person name="Cohen G.N."/>
            <person name="Barbe V."/>
            <person name="Flament D."/>
            <person name="Galperin M."/>
            <person name="Heilig R."/>
            <person name="Lecompte O."/>
            <person name="Poch O."/>
            <person name="Prieur D."/>
            <person name="Querellou J."/>
            <person name="Ripp R."/>
            <person name="Thierry J.-C."/>
            <person name="Van der Oost J."/>
            <person name="Weissenbach J."/>
            <person name="Zivanovic Y."/>
            <person name="Forterre P."/>
        </authorList>
    </citation>
    <scope>NUCLEOTIDE SEQUENCE [LARGE SCALE GENOMIC DNA]</scope>
    <source>
        <strain>GE5 / Orsay</strain>
    </source>
</reference>
<reference key="2">
    <citation type="journal article" date="2012" name="Curr. Microbiol.">
        <title>Re-annotation of two hyperthermophilic archaea Pyrococcus abyssi GE5 and Pyrococcus furiosus DSM 3638.</title>
        <authorList>
            <person name="Gao J."/>
            <person name="Wang J."/>
        </authorList>
    </citation>
    <scope>GENOME REANNOTATION</scope>
    <source>
        <strain>GE5 / Orsay</strain>
    </source>
</reference>
<name>RS9_PYRAB</name>
<gene>
    <name type="primary">rps9</name>
    <name type="ordered locus">PYRAB05330</name>
    <name type="ORF">PAB0366</name>
</gene>
<comment type="similarity">
    <text evidence="2">Belongs to the universal ribosomal protein uS9 family.</text>
</comment>
<proteinExistence type="evidence at protein level"/>
<organism>
    <name type="scientific">Pyrococcus abyssi (strain GE5 / Orsay)</name>
    <dbReference type="NCBI Taxonomy" id="272844"/>
    <lineage>
        <taxon>Archaea</taxon>
        <taxon>Methanobacteriati</taxon>
        <taxon>Methanobacteriota</taxon>
        <taxon>Thermococci</taxon>
        <taxon>Thermococcales</taxon>
        <taxon>Thermococcaceae</taxon>
        <taxon>Pyrococcus</taxon>
    </lineage>
</organism>